<evidence type="ECO:0000255" key="1">
    <source>
        <dbReference type="HAMAP-Rule" id="MF_01522"/>
    </source>
</evidence>
<comment type="function">
    <text evidence="1">Transport of potassium into the cell. Likely operates as a K(+):H(+) symporter.</text>
</comment>
<comment type="catalytic activity">
    <reaction evidence="1">
        <text>K(+)(in) + H(+)(in) = K(+)(out) + H(+)(out)</text>
        <dbReference type="Rhea" id="RHEA:28490"/>
        <dbReference type="ChEBI" id="CHEBI:15378"/>
        <dbReference type="ChEBI" id="CHEBI:29103"/>
    </reaction>
    <physiologicalReaction direction="right-to-left" evidence="1">
        <dbReference type="Rhea" id="RHEA:28492"/>
    </physiologicalReaction>
</comment>
<comment type="subcellular location">
    <subcellularLocation>
        <location evidence="1">Cell inner membrane</location>
        <topology evidence="1">Multi-pass membrane protein</topology>
    </subcellularLocation>
</comment>
<comment type="similarity">
    <text evidence="1">Belongs to the HAK/KUP transporter (TC 2.A.72) family.</text>
</comment>
<organism>
    <name type="scientific">Pseudomonas aeruginosa (strain ATCC 15692 / DSM 22644 / CIP 104116 / JCM 14847 / LMG 12228 / 1C / PRS 101 / PAO1)</name>
    <dbReference type="NCBI Taxonomy" id="208964"/>
    <lineage>
        <taxon>Bacteria</taxon>
        <taxon>Pseudomonadati</taxon>
        <taxon>Pseudomonadota</taxon>
        <taxon>Gammaproteobacteria</taxon>
        <taxon>Pseudomonadales</taxon>
        <taxon>Pseudomonadaceae</taxon>
        <taxon>Pseudomonas</taxon>
    </lineage>
</organism>
<proteinExistence type="inferred from homology"/>
<dbReference type="EMBL" id="AE004091">
    <property type="protein sequence ID" value="AAG04306.1"/>
    <property type="molecule type" value="Genomic_DNA"/>
</dbReference>
<dbReference type="PIR" id="C83530">
    <property type="entry name" value="C83530"/>
</dbReference>
<dbReference type="RefSeq" id="NP_249608.1">
    <property type="nucleotide sequence ID" value="NC_002516.2"/>
</dbReference>
<dbReference type="RefSeq" id="WP_003104754.1">
    <property type="nucleotide sequence ID" value="NZ_QZGE01000007.1"/>
</dbReference>
<dbReference type="FunCoup" id="Q9I540">
    <property type="interactions" value="115"/>
</dbReference>
<dbReference type="STRING" id="208964.PA0917"/>
<dbReference type="PaxDb" id="208964-PA0917"/>
<dbReference type="GeneID" id="880673"/>
<dbReference type="KEGG" id="pae:PA0917"/>
<dbReference type="PATRIC" id="fig|208964.12.peg.952"/>
<dbReference type="PseudoCAP" id="PA0917"/>
<dbReference type="HOGENOM" id="CLU_008142_4_2_6"/>
<dbReference type="InParanoid" id="Q9I540"/>
<dbReference type="OrthoDB" id="9805577at2"/>
<dbReference type="PhylomeDB" id="Q9I540"/>
<dbReference type="BioCyc" id="PAER208964:G1FZ6-936-MONOMER"/>
<dbReference type="Proteomes" id="UP000002438">
    <property type="component" value="Chromosome"/>
</dbReference>
<dbReference type="GO" id="GO:0016020">
    <property type="term" value="C:membrane"/>
    <property type="evidence" value="ECO:0000318"/>
    <property type="project" value="GO_Central"/>
</dbReference>
<dbReference type="GO" id="GO:0005886">
    <property type="term" value="C:plasma membrane"/>
    <property type="evidence" value="ECO:0007669"/>
    <property type="project" value="UniProtKB-SubCell"/>
</dbReference>
<dbReference type="GO" id="GO:0015079">
    <property type="term" value="F:potassium ion transmembrane transporter activity"/>
    <property type="evidence" value="ECO:0000318"/>
    <property type="project" value="GO_Central"/>
</dbReference>
<dbReference type="GO" id="GO:0015293">
    <property type="term" value="F:symporter activity"/>
    <property type="evidence" value="ECO:0007669"/>
    <property type="project" value="UniProtKB-UniRule"/>
</dbReference>
<dbReference type="GO" id="GO:0006813">
    <property type="term" value="P:potassium ion transport"/>
    <property type="evidence" value="ECO:0000318"/>
    <property type="project" value="GO_Central"/>
</dbReference>
<dbReference type="HAMAP" id="MF_01522">
    <property type="entry name" value="Kup"/>
    <property type="match status" value="1"/>
</dbReference>
<dbReference type="InterPro" id="IPR003855">
    <property type="entry name" value="K+_transporter"/>
</dbReference>
<dbReference type="InterPro" id="IPR053952">
    <property type="entry name" value="K_trans_C"/>
</dbReference>
<dbReference type="InterPro" id="IPR053951">
    <property type="entry name" value="K_trans_N"/>
</dbReference>
<dbReference type="InterPro" id="IPR023051">
    <property type="entry name" value="Kup"/>
</dbReference>
<dbReference type="PANTHER" id="PTHR30540:SF79">
    <property type="entry name" value="LOW AFFINITY POTASSIUM TRANSPORT SYSTEM PROTEIN KUP"/>
    <property type="match status" value="1"/>
</dbReference>
<dbReference type="PANTHER" id="PTHR30540">
    <property type="entry name" value="OSMOTIC STRESS POTASSIUM TRANSPORTER"/>
    <property type="match status" value="1"/>
</dbReference>
<dbReference type="Pfam" id="PF02705">
    <property type="entry name" value="K_trans"/>
    <property type="match status" value="1"/>
</dbReference>
<dbReference type="Pfam" id="PF22776">
    <property type="entry name" value="K_trans_C"/>
    <property type="match status" value="1"/>
</dbReference>
<sequence>MSDAATRAEETSEGHSSSAIGLMVGAVGVCYGDIGTSPLYTLKEVFIGGYGVQANHDGVLGVLSLIFWSLVWVVSIKYVIFVLRADNQGEGGVMALSALARRAAAPFGRLQTFVVVAGLIGAALFYGDSMITPAISVLSAVEGLEIAFDGLEHWTVPLALIVLIGLFLIQKHGTARIGILFGPVMVLWFGALAALGVYGVIQQPEVLQAMNPVWAVRFFSSHPGIGVAILGATVLALTGAEALYADMGHFGRKPIARAWFLLVLPALVLNYFGQGATILSNAEAARNPFYLLAPGWALLPMVALSTLATVIASQAVISGAFSLTRQAIQLGYVPRMTIQHTSSHEQGQIYIGGVNWALMVGVVLLVLGFESSASLAAAYGVAVTGTMLITTLLMGVVIWRLWKWPLWLGVPFFCVMLAVDSLFFAANLPKVIQGGAFPVIAGIVIFILMSTWKRGRQLLVERLDEGSLPLSVFISSMRVQPPHRVQGTAVFLTARTDAVPHALLHNLLHNQVLHEQVVLLTVVNEDSPRVSPDRRFEVEAYGDGFFRVILHFGFMEEPDIPAALRLCHLNELDFSPMRTTYFLSRETVIPSKRIGMARWREGLFAFLLKNANGNLRYFNLPLNRVIELGTQVEI</sequence>
<reference key="1">
    <citation type="journal article" date="2000" name="Nature">
        <title>Complete genome sequence of Pseudomonas aeruginosa PAO1, an opportunistic pathogen.</title>
        <authorList>
            <person name="Stover C.K."/>
            <person name="Pham X.-Q.T."/>
            <person name="Erwin A.L."/>
            <person name="Mizoguchi S.D."/>
            <person name="Warrener P."/>
            <person name="Hickey M.J."/>
            <person name="Brinkman F.S.L."/>
            <person name="Hufnagle W.O."/>
            <person name="Kowalik D.J."/>
            <person name="Lagrou M."/>
            <person name="Garber R.L."/>
            <person name="Goltry L."/>
            <person name="Tolentino E."/>
            <person name="Westbrock-Wadman S."/>
            <person name="Yuan Y."/>
            <person name="Brody L.L."/>
            <person name="Coulter S.N."/>
            <person name="Folger K.R."/>
            <person name="Kas A."/>
            <person name="Larbig K."/>
            <person name="Lim R.M."/>
            <person name="Smith K.A."/>
            <person name="Spencer D.H."/>
            <person name="Wong G.K.-S."/>
            <person name="Wu Z."/>
            <person name="Paulsen I.T."/>
            <person name="Reizer J."/>
            <person name="Saier M.H. Jr."/>
            <person name="Hancock R.E.W."/>
            <person name="Lory S."/>
            <person name="Olson M.V."/>
        </authorList>
    </citation>
    <scope>NUCLEOTIDE SEQUENCE [LARGE SCALE GENOMIC DNA]</scope>
    <source>
        <strain>ATCC 15692 / DSM 22644 / CIP 104116 / JCM 14847 / LMG 12228 / 1C / PRS 101 / PAO1</strain>
    </source>
</reference>
<name>KUP_PSEAE</name>
<protein>
    <recommendedName>
        <fullName evidence="1">Probable potassium transport system protein Kup</fullName>
    </recommendedName>
</protein>
<gene>
    <name evidence="1" type="primary">kup</name>
    <name type="ordered locus">PA0917</name>
</gene>
<keyword id="KW-0997">Cell inner membrane</keyword>
<keyword id="KW-1003">Cell membrane</keyword>
<keyword id="KW-0406">Ion transport</keyword>
<keyword id="KW-0472">Membrane</keyword>
<keyword id="KW-0630">Potassium</keyword>
<keyword id="KW-0633">Potassium transport</keyword>
<keyword id="KW-1185">Reference proteome</keyword>
<keyword id="KW-0769">Symport</keyword>
<keyword id="KW-0812">Transmembrane</keyword>
<keyword id="KW-1133">Transmembrane helix</keyword>
<keyword id="KW-0813">Transport</keyword>
<feature type="chain" id="PRO_0000209040" description="Probable potassium transport system protein Kup">
    <location>
        <begin position="1"/>
        <end position="634"/>
    </location>
</feature>
<feature type="transmembrane region" description="Helical" evidence="1">
    <location>
        <begin position="19"/>
        <end position="39"/>
    </location>
</feature>
<feature type="transmembrane region" description="Helical" evidence="1">
    <location>
        <begin position="62"/>
        <end position="82"/>
    </location>
</feature>
<feature type="transmembrane region" description="Helical" evidence="1">
    <location>
        <begin position="113"/>
        <end position="133"/>
    </location>
</feature>
<feature type="transmembrane region" description="Helical" evidence="1">
    <location>
        <begin position="150"/>
        <end position="170"/>
    </location>
</feature>
<feature type="transmembrane region" description="Helical" evidence="1">
    <location>
        <begin position="177"/>
        <end position="197"/>
    </location>
</feature>
<feature type="transmembrane region" description="Helical" evidence="1">
    <location>
        <begin position="225"/>
        <end position="245"/>
    </location>
</feature>
<feature type="transmembrane region" description="Helical" evidence="1">
    <location>
        <begin position="259"/>
        <end position="279"/>
    </location>
</feature>
<feature type="transmembrane region" description="Helical" evidence="1">
    <location>
        <begin position="291"/>
        <end position="311"/>
    </location>
</feature>
<feature type="transmembrane region" description="Helical" evidence="1">
    <location>
        <begin position="349"/>
        <end position="369"/>
    </location>
</feature>
<feature type="transmembrane region" description="Helical" evidence="1">
    <location>
        <begin position="379"/>
        <end position="399"/>
    </location>
</feature>
<feature type="transmembrane region" description="Helical" evidence="1">
    <location>
        <begin position="406"/>
        <end position="426"/>
    </location>
</feature>
<feature type="transmembrane region" description="Helical" evidence="1">
    <location>
        <begin position="431"/>
        <end position="451"/>
    </location>
</feature>
<accession>Q9I540</accession>